<sequence length="448" mass="47578">MTGPEHGSASTIEILPVIGLPEFRPGDDLSAAVAAAAPWLRDGDVVVVTSKVVSKCEGRLVPAPEDPEQRDRLRRKLIEDEAVRVLARKDRTLITENRLGLVQAAAGVDGSNVGRSELALLPVDPDASAATLRAGLRERLGVTVAVVITDTMGRAWRNGQTDAAVGAAGLAVLRNYAGVRDPYGNELVVTEVAVADEIAAAADLVKGKLTATPVAVVRGFGVSDDGSTARQLLRPGANDLFWLGTAEALELGRQQAQLLRRSVRRFSTDPVPGDLVEAAVAEALTAPAPHHTRPTRFVWLQTPAIRARLLDRMKDKWRSDLTSDGLPADAIERRVARGQILYDAPEVVIPMLVPDGAHSYPDAARTDAEHTMFTVAVGAAVQALLVALAVRGLGSCWIGSTIFAADLVRDELDLPVDWEPLGAIAIGYADEPSGLRDPVPAADLLILK</sequence>
<proteinExistence type="inferred from homology"/>
<keyword id="KW-0342">GTP-binding</keyword>
<keyword id="KW-0436">Ligase</keyword>
<keyword id="KW-0460">Magnesium</keyword>
<keyword id="KW-0464">Manganese</keyword>
<keyword id="KW-0479">Metal-binding</keyword>
<keyword id="KW-0511">Multifunctional enzyme</keyword>
<keyword id="KW-0547">Nucleotide-binding</keyword>
<keyword id="KW-0560">Oxidoreductase</keyword>
<keyword id="KW-0630">Potassium</keyword>
<keyword id="KW-1185">Reference proteome</keyword>
<dbReference type="EC" id="6.3.2.31" evidence="1"/>
<dbReference type="EC" id="6.3.2.34" evidence="1"/>
<dbReference type="EC" id="1.3.8.17" evidence="1"/>
<dbReference type="EMBL" id="AE000516">
    <property type="protein sequence ID" value="AAK47702.1"/>
    <property type="molecule type" value="Genomic_DNA"/>
</dbReference>
<dbReference type="PIR" id="G70977">
    <property type="entry name" value="G70977"/>
</dbReference>
<dbReference type="RefSeq" id="WP_003900663.1">
    <property type="nucleotide sequence ID" value="NZ_KK341227.1"/>
</dbReference>
<dbReference type="SMR" id="P9WP78"/>
<dbReference type="KEGG" id="mtc:MT3361"/>
<dbReference type="PATRIC" id="fig|83331.31.peg.3617"/>
<dbReference type="HOGENOM" id="CLU_051152_0_0_11"/>
<dbReference type="UniPathway" id="UPA00071"/>
<dbReference type="Proteomes" id="UP000001020">
    <property type="component" value="Chromosome"/>
</dbReference>
<dbReference type="GO" id="GO:0052618">
    <property type="term" value="F:coenzyme F420-0:L-glutamate ligase activity"/>
    <property type="evidence" value="ECO:0007669"/>
    <property type="project" value="UniProtKB-UniRule"/>
</dbReference>
<dbReference type="GO" id="GO:0052619">
    <property type="term" value="F:coenzyme F420-1:gamma-L-glutamate ligase activity"/>
    <property type="evidence" value="ECO:0007669"/>
    <property type="project" value="UniProtKB-UniRule"/>
</dbReference>
<dbReference type="GO" id="GO:0005525">
    <property type="term" value="F:GTP binding"/>
    <property type="evidence" value="ECO:0007669"/>
    <property type="project" value="UniProtKB-KW"/>
</dbReference>
<dbReference type="GO" id="GO:0046872">
    <property type="term" value="F:metal ion binding"/>
    <property type="evidence" value="ECO:0007669"/>
    <property type="project" value="UniProtKB-KW"/>
</dbReference>
<dbReference type="GO" id="GO:0052890">
    <property type="term" value="F:oxidoreductase activity, acting on the CH-CH group of donors, with a flavin as acceptor"/>
    <property type="evidence" value="ECO:0007669"/>
    <property type="project" value="UniProtKB-UniRule"/>
</dbReference>
<dbReference type="GO" id="GO:0052645">
    <property type="term" value="P:F420-0 metabolic process"/>
    <property type="evidence" value="ECO:0007669"/>
    <property type="project" value="UniProtKB-UniRule"/>
</dbReference>
<dbReference type="CDD" id="cd20607">
    <property type="entry name" value="FbiB_C-like"/>
    <property type="match status" value="1"/>
</dbReference>
<dbReference type="FunFam" id="3.40.109.10:FF:000009">
    <property type="entry name" value="Coenzyme F420:L-glutamate ligase"/>
    <property type="match status" value="1"/>
</dbReference>
<dbReference type="Gene3D" id="3.30.1330.100">
    <property type="entry name" value="CofE-like"/>
    <property type="match status" value="1"/>
</dbReference>
<dbReference type="Gene3D" id="3.90.1660.10">
    <property type="entry name" value="CofE-like domain"/>
    <property type="match status" value="1"/>
</dbReference>
<dbReference type="Gene3D" id="3.40.109.10">
    <property type="entry name" value="NADH Oxidase"/>
    <property type="match status" value="1"/>
</dbReference>
<dbReference type="HAMAP" id="MF_01259">
    <property type="entry name" value="F420_ligase_FbiB"/>
    <property type="match status" value="1"/>
</dbReference>
<dbReference type="InterPro" id="IPR008225">
    <property type="entry name" value="F420-0_g-glutamyl_ligase"/>
</dbReference>
<dbReference type="InterPro" id="IPR002847">
    <property type="entry name" value="F420-0_gamma-glut_ligase-dom"/>
</dbReference>
<dbReference type="InterPro" id="IPR019943">
    <property type="entry name" value="F420_FbiB_C"/>
</dbReference>
<dbReference type="InterPro" id="IPR023661">
    <property type="entry name" value="FbiB"/>
</dbReference>
<dbReference type="InterPro" id="IPR029479">
    <property type="entry name" value="Nitroreductase"/>
</dbReference>
<dbReference type="InterPro" id="IPR000415">
    <property type="entry name" value="Nitroreductase-like"/>
</dbReference>
<dbReference type="NCBIfam" id="TIGR01916">
    <property type="entry name" value="F420_cofE"/>
    <property type="match status" value="1"/>
</dbReference>
<dbReference type="NCBIfam" id="TIGR03553">
    <property type="entry name" value="F420_FbiB_CTERM"/>
    <property type="match status" value="1"/>
</dbReference>
<dbReference type="NCBIfam" id="NF009810">
    <property type="entry name" value="PRK13294.1"/>
    <property type="match status" value="1"/>
</dbReference>
<dbReference type="PANTHER" id="PTHR47917">
    <property type="match status" value="1"/>
</dbReference>
<dbReference type="PANTHER" id="PTHR47917:SF1">
    <property type="entry name" value="COENZYME F420:L-GLUTAMATE LIGASE"/>
    <property type="match status" value="1"/>
</dbReference>
<dbReference type="Pfam" id="PF01996">
    <property type="entry name" value="F420_ligase"/>
    <property type="match status" value="1"/>
</dbReference>
<dbReference type="Pfam" id="PF00881">
    <property type="entry name" value="Nitroreductase"/>
    <property type="match status" value="1"/>
</dbReference>
<dbReference type="SUPFAM" id="SSF144010">
    <property type="entry name" value="CofE-like"/>
    <property type="match status" value="1"/>
</dbReference>
<dbReference type="SUPFAM" id="SSF55469">
    <property type="entry name" value="FMN-dependent nitroreductase-like"/>
    <property type="match status" value="1"/>
</dbReference>
<evidence type="ECO:0000255" key="1">
    <source>
        <dbReference type="HAMAP-Rule" id="MF_01259"/>
    </source>
</evidence>
<organism>
    <name type="scientific">Mycobacterium tuberculosis (strain CDC 1551 / Oshkosh)</name>
    <dbReference type="NCBI Taxonomy" id="83331"/>
    <lineage>
        <taxon>Bacteria</taxon>
        <taxon>Bacillati</taxon>
        <taxon>Actinomycetota</taxon>
        <taxon>Actinomycetes</taxon>
        <taxon>Mycobacteriales</taxon>
        <taxon>Mycobacteriaceae</taxon>
        <taxon>Mycobacterium</taxon>
        <taxon>Mycobacterium tuberculosis complex</taxon>
    </lineage>
</organism>
<gene>
    <name evidence="1" type="primary">fbiB</name>
    <name type="ordered locus">MT3361</name>
</gene>
<reference key="1">
    <citation type="journal article" date="2002" name="J. Bacteriol.">
        <title>Whole-genome comparison of Mycobacterium tuberculosis clinical and laboratory strains.</title>
        <authorList>
            <person name="Fleischmann R.D."/>
            <person name="Alland D."/>
            <person name="Eisen J.A."/>
            <person name="Carpenter L."/>
            <person name="White O."/>
            <person name="Peterson J.D."/>
            <person name="DeBoy R.T."/>
            <person name="Dodson R.J."/>
            <person name="Gwinn M.L."/>
            <person name="Haft D.H."/>
            <person name="Hickey E.K."/>
            <person name="Kolonay J.F."/>
            <person name="Nelson W.C."/>
            <person name="Umayam L.A."/>
            <person name="Ermolaeva M.D."/>
            <person name="Salzberg S.L."/>
            <person name="Delcher A."/>
            <person name="Utterback T.R."/>
            <person name="Weidman J.F."/>
            <person name="Khouri H.M."/>
            <person name="Gill J."/>
            <person name="Mikula A."/>
            <person name="Bishai W."/>
            <person name="Jacobs W.R. Jr."/>
            <person name="Venter J.C."/>
            <person name="Fraser C.M."/>
        </authorList>
    </citation>
    <scope>NUCLEOTIDE SEQUENCE [LARGE SCALE GENOMIC DNA]</scope>
    <source>
        <strain>CDC 1551 / Oshkosh</strain>
    </source>
</reference>
<name>FBIB_MYCTO</name>
<comment type="function">
    <text evidence="1">Bifunctional enzyme that catalyzes the GTP-dependent successive addition of multiple gamma-linked L-glutamates to the L-lactyl phosphodiester of 7,8-didemethyl-8-hydroxy-5-deazariboflavin (F420-0) to form polyglutamated F420 derivatives, and the FMNH2-dependent reduction of dehydro-F420-0 to form F420-0.</text>
</comment>
<comment type="catalytic activity">
    <reaction evidence="1">
        <text>oxidized coenzyme F420-0 + GTP + L-glutamate = oxidized coenzyme F420-1 + GDP + phosphate + H(+)</text>
        <dbReference type="Rhea" id="RHEA:30555"/>
        <dbReference type="ChEBI" id="CHEBI:15378"/>
        <dbReference type="ChEBI" id="CHEBI:29985"/>
        <dbReference type="ChEBI" id="CHEBI:37565"/>
        <dbReference type="ChEBI" id="CHEBI:43474"/>
        <dbReference type="ChEBI" id="CHEBI:58189"/>
        <dbReference type="ChEBI" id="CHEBI:59907"/>
        <dbReference type="ChEBI" id="CHEBI:59920"/>
        <dbReference type="EC" id="6.3.2.31"/>
    </reaction>
</comment>
<comment type="catalytic activity">
    <reaction evidence="1">
        <text>oxidized coenzyme F420-1 + GTP + L-glutamate = oxidized coenzyme F420-2 + GDP + phosphate + H(+)</text>
        <dbReference type="Rhea" id="RHEA:30523"/>
        <dbReference type="ChEBI" id="CHEBI:15378"/>
        <dbReference type="ChEBI" id="CHEBI:29985"/>
        <dbReference type="ChEBI" id="CHEBI:37565"/>
        <dbReference type="ChEBI" id="CHEBI:43474"/>
        <dbReference type="ChEBI" id="CHEBI:57922"/>
        <dbReference type="ChEBI" id="CHEBI:58189"/>
        <dbReference type="ChEBI" id="CHEBI:59920"/>
        <dbReference type="EC" id="6.3.2.34"/>
    </reaction>
</comment>
<comment type="catalytic activity">
    <reaction evidence="1">
        <text>oxidized coenzyme F420-(gamma-L-Glu)(n) + GTP + L-glutamate = oxidized coenzyme F420-(gamma-L-Glu)(n+1) + GDP + phosphate + H(+)</text>
        <dbReference type="Rhea" id="RHEA:51236"/>
        <dbReference type="Rhea" id="RHEA-COMP:12939"/>
        <dbReference type="Rhea" id="RHEA-COMP:12940"/>
        <dbReference type="ChEBI" id="CHEBI:15378"/>
        <dbReference type="ChEBI" id="CHEBI:29985"/>
        <dbReference type="ChEBI" id="CHEBI:37565"/>
        <dbReference type="ChEBI" id="CHEBI:43474"/>
        <dbReference type="ChEBI" id="CHEBI:58189"/>
        <dbReference type="ChEBI" id="CHEBI:133980"/>
    </reaction>
</comment>
<comment type="catalytic activity">
    <reaction evidence="1">
        <text>oxidized coenzyme F420-0 + FMN + H(+) = dehydro coenzyme F420-0 + FMNH2</text>
        <dbReference type="Rhea" id="RHEA:60360"/>
        <dbReference type="ChEBI" id="CHEBI:15378"/>
        <dbReference type="ChEBI" id="CHEBI:57618"/>
        <dbReference type="ChEBI" id="CHEBI:58210"/>
        <dbReference type="ChEBI" id="CHEBI:59907"/>
        <dbReference type="ChEBI" id="CHEBI:143705"/>
        <dbReference type="EC" id="1.3.8.17"/>
    </reaction>
</comment>
<comment type="cofactor">
    <cofactor evidence="1">
        <name>Mg(2+)</name>
        <dbReference type="ChEBI" id="CHEBI:18420"/>
    </cofactor>
    <cofactor evidence="1">
        <name>Mn(2+)</name>
        <dbReference type="ChEBI" id="CHEBI:29035"/>
    </cofactor>
    <text evidence="1">Binds 2 divalent metal cations per subunit. The ions could be magnesium and/or manganese.</text>
</comment>
<comment type="cofactor">
    <cofactor evidence="1">
        <name>K(+)</name>
        <dbReference type="ChEBI" id="CHEBI:29103"/>
    </cofactor>
    <text evidence="1">Monovalent cation. The ion could be potassium.</text>
</comment>
<comment type="pathway">
    <text evidence="1">Cofactor biosynthesis; coenzyme F420 biosynthesis.</text>
</comment>
<comment type="similarity">
    <text evidence="1">In the N-terminal section; belongs to the CofE family.</text>
</comment>
<accession>P9WP78</accession>
<accession>L0TDM4</accession>
<accession>P96867</accession>
<accession>Q7D5T5</accession>
<feature type="chain" id="PRO_0000426999" description="Bifunctional F420 biosynthesis protein FbiB">
    <location>
        <begin position="1"/>
        <end position="448"/>
    </location>
</feature>
<feature type="region of interest" description="Coenzyme F420:L-glutamate ligase" evidence="1">
    <location>
        <begin position="1"/>
        <end position="244"/>
    </location>
</feature>
<feature type="region of interest" description="Dehydro-coenzyme F420-0 reductase" evidence="1">
    <location>
        <begin position="245"/>
        <end position="448"/>
    </location>
</feature>
<feature type="binding site" evidence="1">
    <location>
        <begin position="20"/>
        <end position="23"/>
    </location>
    <ligand>
        <name>GTP</name>
        <dbReference type="ChEBI" id="CHEBI:37565"/>
    </ligand>
</feature>
<feature type="binding site" evidence="1">
    <location>
        <position position="50"/>
    </location>
    <ligand>
        <name>GTP</name>
        <dbReference type="ChEBI" id="CHEBI:37565"/>
    </ligand>
</feature>
<feature type="binding site" evidence="1">
    <location>
        <position position="55"/>
    </location>
    <ligand>
        <name>GTP</name>
        <dbReference type="ChEBI" id="CHEBI:37565"/>
    </ligand>
</feature>
<feature type="binding site" evidence="1">
    <location>
        <position position="109"/>
    </location>
    <ligand>
        <name>a divalent metal cation</name>
        <dbReference type="ChEBI" id="CHEBI:60240"/>
        <label>1</label>
    </ligand>
</feature>
<feature type="binding site" evidence="1">
    <location>
        <position position="112"/>
    </location>
    <ligand>
        <name>GTP</name>
        <dbReference type="ChEBI" id="CHEBI:37565"/>
    </ligand>
</feature>
<feature type="binding site" evidence="1">
    <location>
        <position position="150"/>
    </location>
    <ligand>
        <name>a divalent metal cation</name>
        <dbReference type="ChEBI" id="CHEBI:60240"/>
        <label>1</label>
    </ligand>
</feature>
<feature type="binding site" evidence="1">
    <location>
        <position position="151"/>
    </location>
    <ligand>
        <name>a divalent metal cation</name>
        <dbReference type="ChEBI" id="CHEBI:60240"/>
        <label>2</label>
    </ligand>
</feature>
<feature type="binding site" evidence="1">
    <location>
        <begin position="260"/>
        <end position="264"/>
    </location>
    <ligand>
        <name>FMN</name>
        <dbReference type="ChEBI" id="CHEBI:58210"/>
    </ligand>
</feature>
<feature type="binding site" evidence="1">
    <location>
        <position position="288"/>
    </location>
    <ligand>
        <name>FMN</name>
        <dbReference type="ChEBI" id="CHEBI:58210"/>
    </ligand>
</feature>
<feature type="binding site" evidence="1">
    <location>
        <position position="320"/>
    </location>
    <ligand>
        <name>coenzyme F420-(gamma-Glu)n</name>
        <dbReference type="ChEBI" id="CHEBI:133980"/>
    </ligand>
</feature>
<feature type="binding site" evidence="1">
    <location>
        <position position="399"/>
    </location>
    <ligand>
        <name>FMN</name>
        <dbReference type="ChEBI" id="CHEBI:58210"/>
    </ligand>
</feature>
<feature type="binding site" evidence="1">
    <location>
        <position position="436"/>
    </location>
    <ligand>
        <name>FMN</name>
        <dbReference type="ChEBI" id="CHEBI:58210"/>
    </ligand>
</feature>
<protein>
    <recommendedName>
        <fullName evidence="1">Bifunctional F420 biosynthesis protein FbiB</fullName>
    </recommendedName>
    <domain>
        <recommendedName>
            <fullName evidence="1">Coenzyme F420:L-glutamate ligase</fullName>
            <ecNumber evidence="1">6.3.2.31</ecNumber>
            <ecNumber evidence="1">6.3.2.34</ecNumber>
        </recommendedName>
        <alternativeName>
            <fullName evidence="1">Coenzyme F420-0:L-glutamate ligase</fullName>
        </alternativeName>
        <alternativeName>
            <fullName evidence="1">Coenzyme F420-1:gamma-L-glutamate ligase</fullName>
        </alternativeName>
    </domain>
    <domain>
        <recommendedName>
            <fullName evidence="1">Dehydro-coenzyme F420-0 reductase</fullName>
            <ecNumber evidence="1">1.3.8.17</ecNumber>
        </recommendedName>
    </domain>
</protein>